<proteinExistence type="inferred from homology"/>
<protein>
    <recommendedName>
        <fullName evidence="1">Aspartate--tRNA(Asp/Asn) ligase</fullName>
        <ecNumber evidence="1">6.1.1.23</ecNumber>
    </recommendedName>
    <alternativeName>
        <fullName evidence="1">Aspartyl-tRNA synthetase</fullName>
        <shortName evidence="1">AspRS</shortName>
    </alternativeName>
    <alternativeName>
        <fullName evidence="1">Non-discriminating aspartyl-tRNA synthetase</fullName>
        <shortName evidence="1">ND-AspRS</shortName>
    </alternativeName>
</protein>
<name>SYDND_CITBB</name>
<dbReference type="EC" id="6.1.1.23" evidence="1"/>
<dbReference type="EMBL" id="CP001124">
    <property type="protein sequence ID" value="ACH39906.1"/>
    <property type="molecule type" value="Genomic_DNA"/>
</dbReference>
<dbReference type="RefSeq" id="WP_012531331.1">
    <property type="nucleotide sequence ID" value="NC_011146.1"/>
</dbReference>
<dbReference type="SMR" id="B5EIV1"/>
<dbReference type="STRING" id="404380.Gbem_2903"/>
<dbReference type="KEGG" id="gbm:Gbem_2903"/>
<dbReference type="eggNOG" id="COG0173">
    <property type="taxonomic scope" value="Bacteria"/>
</dbReference>
<dbReference type="HOGENOM" id="CLU_014330_3_2_7"/>
<dbReference type="OrthoDB" id="9802326at2"/>
<dbReference type="Proteomes" id="UP000008825">
    <property type="component" value="Chromosome"/>
</dbReference>
<dbReference type="GO" id="GO:0005737">
    <property type="term" value="C:cytoplasm"/>
    <property type="evidence" value="ECO:0007669"/>
    <property type="project" value="UniProtKB-SubCell"/>
</dbReference>
<dbReference type="GO" id="GO:0004815">
    <property type="term" value="F:aspartate-tRNA ligase activity"/>
    <property type="evidence" value="ECO:0007669"/>
    <property type="project" value="UniProtKB-UniRule"/>
</dbReference>
<dbReference type="GO" id="GO:0050560">
    <property type="term" value="F:aspartate-tRNA(Asn) ligase activity"/>
    <property type="evidence" value="ECO:0007669"/>
    <property type="project" value="UniProtKB-EC"/>
</dbReference>
<dbReference type="GO" id="GO:0005524">
    <property type="term" value="F:ATP binding"/>
    <property type="evidence" value="ECO:0007669"/>
    <property type="project" value="UniProtKB-UniRule"/>
</dbReference>
<dbReference type="GO" id="GO:0003676">
    <property type="term" value="F:nucleic acid binding"/>
    <property type="evidence" value="ECO:0007669"/>
    <property type="project" value="InterPro"/>
</dbReference>
<dbReference type="GO" id="GO:0006422">
    <property type="term" value="P:aspartyl-tRNA aminoacylation"/>
    <property type="evidence" value="ECO:0007669"/>
    <property type="project" value="UniProtKB-UniRule"/>
</dbReference>
<dbReference type="CDD" id="cd00777">
    <property type="entry name" value="AspRS_core"/>
    <property type="match status" value="1"/>
</dbReference>
<dbReference type="CDD" id="cd04317">
    <property type="entry name" value="EcAspRS_like_N"/>
    <property type="match status" value="1"/>
</dbReference>
<dbReference type="Gene3D" id="3.30.930.10">
    <property type="entry name" value="Bira Bifunctional Protein, Domain 2"/>
    <property type="match status" value="1"/>
</dbReference>
<dbReference type="Gene3D" id="3.30.1360.30">
    <property type="entry name" value="GAD-like domain"/>
    <property type="match status" value="1"/>
</dbReference>
<dbReference type="Gene3D" id="2.40.50.140">
    <property type="entry name" value="Nucleic acid-binding proteins"/>
    <property type="match status" value="1"/>
</dbReference>
<dbReference type="HAMAP" id="MF_00044">
    <property type="entry name" value="Asp_tRNA_synth_type1"/>
    <property type="match status" value="1"/>
</dbReference>
<dbReference type="InterPro" id="IPR004364">
    <property type="entry name" value="Aa-tRNA-synt_II"/>
</dbReference>
<dbReference type="InterPro" id="IPR006195">
    <property type="entry name" value="aa-tRNA-synth_II"/>
</dbReference>
<dbReference type="InterPro" id="IPR045864">
    <property type="entry name" value="aa-tRNA-synth_II/BPL/LPL"/>
</dbReference>
<dbReference type="InterPro" id="IPR004524">
    <property type="entry name" value="Asp-tRNA-ligase_1"/>
</dbReference>
<dbReference type="InterPro" id="IPR047089">
    <property type="entry name" value="Asp-tRNA-ligase_1_N"/>
</dbReference>
<dbReference type="InterPro" id="IPR002312">
    <property type="entry name" value="Asp/Asn-tRNA-synth_IIb"/>
</dbReference>
<dbReference type="InterPro" id="IPR047090">
    <property type="entry name" value="AspRS_core"/>
</dbReference>
<dbReference type="InterPro" id="IPR004115">
    <property type="entry name" value="GAD-like_sf"/>
</dbReference>
<dbReference type="InterPro" id="IPR029351">
    <property type="entry name" value="GAD_dom"/>
</dbReference>
<dbReference type="InterPro" id="IPR012340">
    <property type="entry name" value="NA-bd_OB-fold"/>
</dbReference>
<dbReference type="InterPro" id="IPR004365">
    <property type="entry name" value="NA-bd_OB_tRNA"/>
</dbReference>
<dbReference type="NCBIfam" id="TIGR00459">
    <property type="entry name" value="aspS_bact"/>
    <property type="match status" value="1"/>
</dbReference>
<dbReference type="NCBIfam" id="NF001750">
    <property type="entry name" value="PRK00476.1"/>
    <property type="match status" value="1"/>
</dbReference>
<dbReference type="PANTHER" id="PTHR22594:SF5">
    <property type="entry name" value="ASPARTATE--TRNA LIGASE, MITOCHONDRIAL"/>
    <property type="match status" value="1"/>
</dbReference>
<dbReference type="PANTHER" id="PTHR22594">
    <property type="entry name" value="ASPARTYL/LYSYL-TRNA SYNTHETASE"/>
    <property type="match status" value="1"/>
</dbReference>
<dbReference type="Pfam" id="PF02938">
    <property type="entry name" value="GAD"/>
    <property type="match status" value="1"/>
</dbReference>
<dbReference type="Pfam" id="PF00152">
    <property type="entry name" value="tRNA-synt_2"/>
    <property type="match status" value="1"/>
</dbReference>
<dbReference type="Pfam" id="PF01336">
    <property type="entry name" value="tRNA_anti-codon"/>
    <property type="match status" value="1"/>
</dbReference>
<dbReference type="PRINTS" id="PR01042">
    <property type="entry name" value="TRNASYNTHASP"/>
</dbReference>
<dbReference type="SUPFAM" id="SSF55681">
    <property type="entry name" value="Class II aaRS and biotin synthetases"/>
    <property type="match status" value="1"/>
</dbReference>
<dbReference type="SUPFAM" id="SSF55261">
    <property type="entry name" value="GAD domain-like"/>
    <property type="match status" value="1"/>
</dbReference>
<dbReference type="SUPFAM" id="SSF50249">
    <property type="entry name" value="Nucleic acid-binding proteins"/>
    <property type="match status" value="1"/>
</dbReference>
<dbReference type="PROSITE" id="PS50862">
    <property type="entry name" value="AA_TRNA_LIGASE_II"/>
    <property type="match status" value="1"/>
</dbReference>
<reference key="1">
    <citation type="submission" date="2008-07" db="EMBL/GenBank/DDBJ databases">
        <title>Complete sequence of Geobacter bemidjiensis BEM.</title>
        <authorList>
            <consortium name="US DOE Joint Genome Institute"/>
            <person name="Lucas S."/>
            <person name="Copeland A."/>
            <person name="Lapidus A."/>
            <person name="Glavina del Rio T."/>
            <person name="Dalin E."/>
            <person name="Tice H."/>
            <person name="Bruce D."/>
            <person name="Goodwin L."/>
            <person name="Pitluck S."/>
            <person name="Kiss H."/>
            <person name="Brettin T."/>
            <person name="Detter J.C."/>
            <person name="Han C."/>
            <person name="Kuske C.R."/>
            <person name="Schmutz J."/>
            <person name="Larimer F."/>
            <person name="Land M."/>
            <person name="Hauser L."/>
            <person name="Kyrpides N."/>
            <person name="Lykidis A."/>
            <person name="Lovley D."/>
            <person name="Richardson P."/>
        </authorList>
    </citation>
    <scope>NUCLEOTIDE SEQUENCE [LARGE SCALE GENOMIC DNA]</scope>
    <source>
        <strain>ATCC BAA-1014 / DSM 16622 / JCM 12645 / Bem</strain>
    </source>
</reference>
<feature type="chain" id="PRO_1000090996" description="Aspartate--tRNA(Asp/Asn) ligase">
    <location>
        <begin position="1"/>
        <end position="593"/>
    </location>
</feature>
<feature type="region of interest" description="Aspartate" evidence="1">
    <location>
        <begin position="206"/>
        <end position="209"/>
    </location>
</feature>
<feature type="binding site" evidence="1">
    <location>
        <position position="182"/>
    </location>
    <ligand>
        <name>L-aspartate</name>
        <dbReference type="ChEBI" id="CHEBI:29991"/>
    </ligand>
</feature>
<feature type="binding site" evidence="1">
    <location>
        <begin position="228"/>
        <end position="230"/>
    </location>
    <ligand>
        <name>ATP</name>
        <dbReference type="ChEBI" id="CHEBI:30616"/>
    </ligand>
</feature>
<feature type="binding site" evidence="1">
    <location>
        <position position="228"/>
    </location>
    <ligand>
        <name>L-aspartate</name>
        <dbReference type="ChEBI" id="CHEBI:29991"/>
    </ligand>
</feature>
<feature type="binding site" evidence="1">
    <location>
        <position position="237"/>
    </location>
    <ligand>
        <name>ATP</name>
        <dbReference type="ChEBI" id="CHEBI:30616"/>
    </ligand>
</feature>
<feature type="binding site" evidence="1">
    <location>
        <position position="455"/>
    </location>
    <ligand>
        <name>L-aspartate</name>
        <dbReference type="ChEBI" id="CHEBI:29991"/>
    </ligand>
</feature>
<feature type="binding site" evidence="1">
    <location>
        <position position="489"/>
    </location>
    <ligand>
        <name>ATP</name>
        <dbReference type="ChEBI" id="CHEBI:30616"/>
    </ligand>
</feature>
<feature type="binding site" evidence="1">
    <location>
        <position position="496"/>
    </location>
    <ligand>
        <name>L-aspartate</name>
        <dbReference type="ChEBI" id="CHEBI:29991"/>
    </ligand>
</feature>
<feature type="binding site" evidence="1">
    <location>
        <begin position="541"/>
        <end position="544"/>
    </location>
    <ligand>
        <name>ATP</name>
        <dbReference type="ChEBI" id="CHEBI:30616"/>
    </ligand>
</feature>
<feature type="site" description="Important for tRNA non-discrimination" evidence="1">
    <location>
        <position position="38"/>
    </location>
</feature>
<feature type="site" description="Important for tRNA non-discrimination" evidence="1">
    <location>
        <position position="90"/>
    </location>
</feature>
<organism>
    <name type="scientific">Citrifermentans bemidjiense (strain ATCC BAA-1014 / DSM 16622 / JCM 12645 / Bem)</name>
    <name type="common">Geobacter bemidjiensis</name>
    <dbReference type="NCBI Taxonomy" id="404380"/>
    <lineage>
        <taxon>Bacteria</taxon>
        <taxon>Pseudomonadati</taxon>
        <taxon>Thermodesulfobacteriota</taxon>
        <taxon>Desulfuromonadia</taxon>
        <taxon>Geobacterales</taxon>
        <taxon>Geobacteraceae</taxon>
        <taxon>Citrifermentans</taxon>
    </lineage>
</organism>
<gene>
    <name evidence="1" type="primary">aspS</name>
    <name type="ordered locus">Gbem_2903</name>
</gene>
<keyword id="KW-0030">Aminoacyl-tRNA synthetase</keyword>
<keyword id="KW-0067">ATP-binding</keyword>
<keyword id="KW-0963">Cytoplasm</keyword>
<keyword id="KW-0436">Ligase</keyword>
<keyword id="KW-0547">Nucleotide-binding</keyword>
<keyword id="KW-0648">Protein biosynthesis</keyword>
<keyword id="KW-1185">Reference proteome</keyword>
<comment type="function">
    <text evidence="1">Aspartyl-tRNA synthetase with relaxed tRNA specificity since it is able to aspartylate not only its cognate tRNA(Asp) but also tRNA(Asn). Reaction proceeds in two steps: L-aspartate is first activated by ATP to form Asp-AMP and then transferred to the acceptor end of tRNA(Asp/Asn).</text>
</comment>
<comment type="catalytic activity">
    <reaction evidence="1">
        <text>tRNA(Asx) + L-aspartate + ATP = L-aspartyl-tRNA(Asx) + AMP + diphosphate</text>
        <dbReference type="Rhea" id="RHEA:18349"/>
        <dbReference type="Rhea" id="RHEA-COMP:9710"/>
        <dbReference type="Rhea" id="RHEA-COMP:9711"/>
        <dbReference type="ChEBI" id="CHEBI:29991"/>
        <dbReference type="ChEBI" id="CHEBI:30616"/>
        <dbReference type="ChEBI" id="CHEBI:33019"/>
        <dbReference type="ChEBI" id="CHEBI:78442"/>
        <dbReference type="ChEBI" id="CHEBI:78516"/>
        <dbReference type="ChEBI" id="CHEBI:456215"/>
        <dbReference type="EC" id="6.1.1.23"/>
    </reaction>
</comment>
<comment type="subunit">
    <text evidence="1">Homodimer.</text>
</comment>
<comment type="subcellular location">
    <subcellularLocation>
        <location evidence="1">Cytoplasm</location>
    </subcellularLocation>
</comment>
<comment type="similarity">
    <text evidence="1">Belongs to the class-II aminoacyl-tRNA synthetase family. Type 1 subfamily.</text>
</comment>
<accession>B5EIV1</accession>
<evidence type="ECO:0000255" key="1">
    <source>
        <dbReference type="HAMAP-Rule" id="MF_00044"/>
    </source>
</evidence>
<sequence>MIDFLGDWKRSSYCGELRGGHIGQEVTLMGWVSKRRDHGGLIFVDLRDRDGISQIVFDPERCPEAHAKAESARNEYVLAIRGTVAARPEGTVNPKMKTGEIEVLVTECKLLNPSKALPFTLDGFVDVNENIRLKYRYLDLRTGTLQQNLMLRSKVAQLTRSYLSDNGFIELETPFLTKSTPEGARDFLVPSRINKGEFYALPQSPQLFKQILMVSGFDRYFQIVRCFRDEDLRADRQPEFTQIDCEMSFIDREDIITVMEGLMARIFTEARGVKVELPIERMTYQEAIRRFGVDNPDLRFGLELVELSDIVKNSGFKVFADVVNGGGIVKGMNVKGAGAMSRKEIDDLTEFAKIYGAKGLAYVKMTAEGWQSPIAKFFTPEEIATMDKAFDAKEGDLLLFVADKPKVVNDSLGKLRNHLAAKMGLTDPNVFRFVWITDFPLLEWDEEAKRWAAVHHPFTAPMDEDLQYVESDPGRCRAKAYDLVLNGNEIGGGSIRIHQEEVQSLMFKMLGLSEENARSKFGFLLDALEYGTPPHGGIAFGLDRLMMLITGSDSIRDVIAFPKTQKGACLMSDAPSGVDALQLRELGIRLAAK</sequence>